<sequence length="372" mass="40684">MHNQAPIQRRKSTRIYVGNVPIGDGAPIAVQSMTNTRTTDVEATVNQIKALERVGADIVRVSVPTMDAAEAFKLIKQQVNVPLVADIHFDYRIALKVAEYGVDCLRINPGNIGNEERIRMVVDCARDKNIPIRIGVNAGSLEKDLQEKYGEPTPQALLESAMRHVDHLDRLNFDQFKVSVKASDVFLAVESYRLLAKQIDQPLHLGITEAGGARSGAVKSAIGLGLLLSEGIGDTLRVSLAADPVEEIKVGFDILKSLRIRSRGINFIACPTCSRQEFDVIGTVNALEQRLEDIITPMDVSIIGCVVNGPGEALVSTLGVTGGNKKSGLYEDGVRKDRLDNNDMIDQLEARIRAKASQLDEARRIDVQQVEK</sequence>
<keyword id="KW-0004">4Fe-4S</keyword>
<keyword id="KW-0408">Iron</keyword>
<keyword id="KW-0411">Iron-sulfur</keyword>
<keyword id="KW-0414">Isoprene biosynthesis</keyword>
<keyword id="KW-0479">Metal-binding</keyword>
<keyword id="KW-0560">Oxidoreductase</keyword>
<keyword id="KW-1185">Reference proteome</keyword>
<organism>
    <name type="scientific">Escherichia coli (strain K12)</name>
    <dbReference type="NCBI Taxonomy" id="83333"/>
    <lineage>
        <taxon>Bacteria</taxon>
        <taxon>Pseudomonadati</taxon>
        <taxon>Pseudomonadota</taxon>
        <taxon>Gammaproteobacteria</taxon>
        <taxon>Enterobacterales</taxon>
        <taxon>Enterobacteriaceae</taxon>
        <taxon>Escherichia</taxon>
    </lineage>
</organism>
<feature type="chain" id="PRO_0000190572" description="4-hydroxy-3-methylbut-2-en-1-yl diphosphate synthase (flavodoxin)">
    <location>
        <begin position="1"/>
        <end position="372"/>
    </location>
</feature>
<feature type="binding site" evidence="1">
    <location>
        <position position="270"/>
    </location>
    <ligand>
        <name>[4Fe-4S] cluster</name>
        <dbReference type="ChEBI" id="CHEBI:49883"/>
    </ligand>
</feature>
<feature type="binding site" evidence="1">
    <location>
        <position position="273"/>
    </location>
    <ligand>
        <name>[4Fe-4S] cluster</name>
        <dbReference type="ChEBI" id="CHEBI:49883"/>
    </ligand>
</feature>
<feature type="binding site" evidence="1">
    <location>
        <position position="305"/>
    </location>
    <ligand>
        <name>[4Fe-4S] cluster</name>
        <dbReference type="ChEBI" id="CHEBI:49883"/>
    </ligand>
</feature>
<feature type="binding site" evidence="1">
    <location>
        <position position="312"/>
    </location>
    <ligand>
        <name>[4Fe-4S] cluster</name>
        <dbReference type="ChEBI" id="CHEBI:49883"/>
    </ligand>
</feature>
<feature type="mutagenesis site" description="Loss of activity." evidence="6">
    <original>G</original>
    <variation>D</variation>
    <location>
        <position position="322"/>
    </location>
</feature>
<feature type="mutagenesis site" description="Loss of activity." evidence="6">
    <original>G</original>
    <variation>D</variation>
    <location>
        <position position="328"/>
    </location>
</feature>
<feature type="mutagenesis site" description="Loss of activity." evidence="6">
    <original>R</original>
    <variation>C</variation>
    <location>
        <position position="335"/>
    </location>
</feature>
<name>ISPG_ECOLI</name>
<proteinExistence type="evidence at protein level"/>
<gene>
    <name evidence="1" type="primary">ispG</name>
    <name type="synonym">gcpE</name>
    <name type="ordered locus">b2515</name>
    <name type="ordered locus">JW2499</name>
</gene>
<accession>P62620</accession>
<accession>P27433</accession>
<accession>P76984</accession>
<accession>P76985</accession>
<dbReference type="EC" id="1.17.7.3" evidence="1 4 5 8"/>
<dbReference type="EMBL" id="X64451">
    <property type="protein sequence ID" value="CAA45783.1"/>
    <property type="molecule type" value="Genomic_DNA"/>
</dbReference>
<dbReference type="EMBL" id="AY033515">
    <property type="protein sequence ID" value="AAK53460.1"/>
    <property type="molecule type" value="Genomic_DNA"/>
</dbReference>
<dbReference type="EMBL" id="U00096">
    <property type="protein sequence ID" value="AAC75568.1"/>
    <property type="molecule type" value="Genomic_DNA"/>
</dbReference>
<dbReference type="EMBL" id="AP009048">
    <property type="protein sequence ID" value="BAA16402.2"/>
    <property type="molecule type" value="Genomic_DNA"/>
</dbReference>
<dbReference type="EMBL" id="M11843">
    <property type="status" value="NOT_ANNOTATED_CDS"/>
    <property type="molecule type" value="Genomic_DNA"/>
</dbReference>
<dbReference type="PIR" id="S23058">
    <property type="entry name" value="S23058"/>
</dbReference>
<dbReference type="RefSeq" id="NP_417010.1">
    <property type="nucleotide sequence ID" value="NC_000913.3"/>
</dbReference>
<dbReference type="RefSeq" id="WP_000551807.1">
    <property type="nucleotide sequence ID" value="NZ_STEB01000011.1"/>
</dbReference>
<dbReference type="SMR" id="P62620"/>
<dbReference type="BioGRID" id="4260590">
    <property type="interactions" value="353"/>
</dbReference>
<dbReference type="BioGRID" id="851330">
    <property type="interactions" value="1"/>
</dbReference>
<dbReference type="DIP" id="DIP-35832N"/>
<dbReference type="FunCoup" id="P62620">
    <property type="interactions" value="425"/>
</dbReference>
<dbReference type="IntAct" id="P62620">
    <property type="interactions" value="10"/>
</dbReference>
<dbReference type="STRING" id="511145.b2515"/>
<dbReference type="jPOST" id="P62620"/>
<dbReference type="PaxDb" id="511145-b2515"/>
<dbReference type="EnsemblBacteria" id="AAC75568">
    <property type="protein sequence ID" value="AAC75568"/>
    <property type="gene ID" value="b2515"/>
</dbReference>
<dbReference type="GeneID" id="86947404"/>
<dbReference type="GeneID" id="946991"/>
<dbReference type="KEGG" id="ecj:JW2499"/>
<dbReference type="KEGG" id="eco:b2515"/>
<dbReference type="KEGG" id="ecoc:C3026_13945"/>
<dbReference type="PATRIC" id="fig|1411691.4.peg.4221"/>
<dbReference type="EchoBASE" id="EB0365"/>
<dbReference type="eggNOG" id="COG0821">
    <property type="taxonomic scope" value="Bacteria"/>
</dbReference>
<dbReference type="InParanoid" id="P62620"/>
<dbReference type="OMA" id="PTCGRTQ"/>
<dbReference type="OrthoDB" id="9803214at2"/>
<dbReference type="PhylomeDB" id="P62620"/>
<dbReference type="BioCyc" id="EcoCyc:EG10370-MONOMER"/>
<dbReference type="BioCyc" id="MetaCyc:EG10370-MONOMER"/>
<dbReference type="BRENDA" id="1.17.7.3">
    <property type="organism ID" value="2026"/>
</dbReference>
<dbReference type="UniPathway" id="UPA00056">
    <property type="reaction ID" value="UER00096"/>
</dbReference>
<dbReference type="PRO" id="PR:P62620"/>
<dbReference type="Proteomes" id="UP000000625">
    <property type="component" value="Chromosome"/>
</dbReference>
<dbReference type="GO" id="GO:0005829">
    <property type="term" value="C:cytosol"/>
    <property type="evidence" value="ECO:0000314"/>
    <property type="project" value="EcoCyc"/>
</dbReference>
<dbReference type="GO" id="GO:0051539">
    <property type="term" value="F:4 iron, 4 sulfur cluster binding"/>
    <property type="evidence" value="ECO:0000314"/>
    <property type="project" value="EcoCyc"/>
</dbReference>
<dbReference type="GO" id="GO:0046429">
    <property type="term" value="F:4-hydroxy-3-methylbut-2-en-1-yl diphosphate synthase activity (ferredoxin)"/>
    <property type="evidence" value="ECO:0000314"/>
    <property type="project" value="EcoCyc"/>
</dbReference>
<dbReference type="GO" id="GO:0141197">
    <property type="term" value="F:4-hydroxy-3-methylbut-2-enyl-diphosphate synthase activity (flavodoxin)"/>
    <property type="evidence" value="ECO:0007669"/>
    <property type="project" value="UniProtKB-EC"/>
</dbReference>
<dbReference type="GO" id="GO:0005506">
    <property type="term" value="F:iron ion binding"/>
    <property type="evidence" value="ECO:0007669"/>
    <property type="project" value="InterPro"/>
</dbReference>
<dbReference type="GO" id="GO:0046872">
    <property type="term" value="F:metal ion binding"/>
    <property type="evidence" value="ECO:0000314"/>
    <property type="project" value="EcoCyc"/>
</dbReference>
<dbReference type="GO" id="GO:0019288">
    <property type="term" value="P:isopentenyl diphosphate biosynthetic process, methylerythritol 4-phosphate pathway"/>
    <property type="evidence" value="ECO:0000315"/>
    <property type="project" value="EcoCyc"/>
</dbReference>
<dbReference type="GO" id="GO:0016114">
    <property type="term" value="P:terpenoid biosynthetic process"/>
    <property type="evidence" value="ECO:0007669"/>
    <property type="project" value="InterPro"/>
</dbReference>
<dbReference type="FunFam" id="3.20.20.20:FF:000001">
    <property type="entry name" value="4-hydroxy-3-methylbut-2-en-1-yl diphosphate synthase (flavodoxin)"/>
    <property type="match status" value="1"/>
</dbReference>
<dbReference type="FunFam" id="3.30.413.10:FF:000002">
    <property type="entry name" value="4-hydroxy-3-methylbut-2-en-1-yl diphosphate synthase (flavodoxin)"/>
    <property type="match status" value="1"/>
</dbReference>
<dbReference type="Gene3D" id="3.20.20.20">
    <property type="entry name" value="Dihydropteroate synthase-like"/>
    <property type="match status" value="1"/>
</dbReference>
<dbReference type="Gene3D" id="3.30.413.10">
    <property type="entry name" value="Sulfite Reductase Hemoprotein, domain 1"/>
    <property type="match status" value="1"/>
</dbReference>
<dbReference type="HAMAP" id="MF_00159">
    <property type="entry name" value="IspG"/>
    <property type="match status" value="1"/>
</dbReference>
<dbReference type="InterPro" id="IPR011005">
    <property type="entry name" value="Dihydropteroate_synth-like_sf"/>
</dbReference>
<dbReference type="InterPro" id="IPR016425">
    <property type="entry name" value="IspG_bac"/>
</dbReference>
<dbReference type="InterPro" id="IPR004588">
    <property type="entry name" value="IspG_bac-typ"/>
</dbReference>
<dbReference type="InterPro" id="IPR045854">
    <property type="entry name" value="NO2/SO3_Rdtase_4Fe4S_sf"/>
</dbReference>
<dbReference type="NCBIfam" id="TIGR00612">
    <property type="entry name" value="ispG_gcpE"/>
    <property type="match status" value="1"/>
</dbReference>
<dbReference type="NCBIfam" id="NF001540">
    <property type="entry name" value="PRK00366.1"/>
    <property type="match status" value="1"/>
</dbReference>
<dbReference type="PANTHER" id="PTHR30454">
    <property type="entry name" value="4-HYDROXY-3-METHYLBUT-2-EN-1-YL DIPHOSPHATE SYNTHASE"/>
    <property type="match status" value="1"/>
</dbReference>
<dbReference type="PANTHER" id="PTHR30454:SF0">
    <property type="entry name" value="4-HYDROXY-3-METHYLBUT-2-EN-1-YL DIPHOSPHATE SYNTHASE (FERREDOXIN), CHLOROPLASTIC"/>
    <property type="match status" value="1"/>
</dbReference>
<dbReference type="Pfam" id="PF04551">
    <property type="entry name" value="GcpE"/>
    <property type="match status" value="1"/>
</dbReference>
<dbReference type="PIRSF" id="PIRSF004640">
    <property type="entry name" value="IspG"/>
    <property type="match status" value="1"/>
</dbReference>
<dbReference type="SUPFAM" id="SSF51717">
    <property type="entry name" value="Dihydropteroate synthetase-like"/>
    <property type="match status" value="1"/>
</dbReference>
<dbReference type="SUPFAM" id="SSF56014">
    <property type="entry name" value="Nitrite and sulphite reductase 4Fe-4S domain-like"/>
    <property type="match status" value="1"/>
</dbReference>
<evidence type="ECO:0000255" key="1">
    <source>
        <dbReference type="HAMAP-Rule" id="MF_00159"/>
    </source>
</evidence>
<evidence type="ECO:0000269" key="2">
    <source>
    </source>
</evidence>
<evidence type="ECO:0000269" key="3">
    <source>
    </source>
</evidence>
<evidence type="ECO:0000269" key="4">
    <source>
    </source>
</evidence>
<evidence type="ECO:0000269" key="5">
    <source>
    </source>
</evidence>
<evidence type="ECO:0000269" key="6">
    <source>
    </source>
</evidence>
<evidence type="ECO:0000269" key="7">
    <source>
    </source>
</evidence>
<evidence type="ECO:0000269" key="8">
    <source>
    </source>
</evidence>
<protein>
    <recommendedName>
        <fullName evidence="1">4-hydroxy-3-methylbut-2-en-1-yl diphosphate synthase (flavodoxin)</fullName>
        <ecNumber evidence="1 4 5 8">1.17.7.3</ecNumber>
    </recommendedName>
    <alternativeName>
        <fullName evidence="1">1-hydroxy-2-methyl-2-(E)-butenyl 4-diphosphate synthase</fullName>
    </alternativeName>
    <alternativeName>
        <fullName>Protein GcpE</fullName>
        <shortName>Protein E</shortName>
    </alternativeName>
</protein>
<reference key="1">
    <citation type="journal article" date="1992" name="FEMS Microbiol. Lett.">
        <title>Sequence and characterization of the gcpE gene of Escherichia coli.</title>
        <authorList>
            <person name="Baker J."/>
            <person name="Franklin D.B."/>
            <person name="Parker J."/>
        </authorList>
    </citation>
    <scope>NUCLEOTIDE SEQUENCE [GENOMIC DNA]</scope>
    <source>
        <strain>K12</strain>
    </source>
</reference>
<reference key="2">
    <citation type="journal article" date="2001" name="Proc. Natl. Acad. Sci. U.S.A.">
        <title>Studies on the nonmevalonate pathway to terpenes: the role of the GcpE (IspG) protein.</title>
        <authorList>
            <person name="Hecht S."/>
            <person name="Eisenreich W."/>
            <person name="Adam P."/>
            <person name="Amslinger S."/>
            <person name="Kis K."/>
            <person name="Bacher A."/>
            <person name="Arigoni D."/>
            <person name="Rohdich F."/>
        </authorList>
    </citation>
    <scope>NUCLEOTIDE SEQUENCE [GENOMIC DNA]</scope>
    <scope>CHARACTERIZATION</scope>
</reference>
<reference key="3">
    <citation type="journal article" date="1997" name="DNA Res.">
        <title>Construction of a contiguous 874-kb sequence of the Escherichia coli-K12 genome corresponding to 50.0-68.8 min on the linkage map and analysis of its sequence features.</title>
        <authorList>
            <person name="Yamamoto Y."/>
            <person name="Aiba H."/>
            <person name="Baba T."/>
            <person name="Hayashi K."/>
            <person name="Inada T."/>
            <person name="Isono K."/>
            <person name="Itoh T."/>
            <person name="Kimura S."/>
            <person name="Kitagawa M."/>
            <person name="Makino K."/>
            <person name="Miki T."/>
            <person name="Mitsuhashi N."/>
            <person name="Mizobuchi K."/>
            <person name="Mori H."/>
            <person name="Nakade S."/>
            <person name="Nakamura Y."/>
            <person name="Nashimoto H."/>
            <person name="Oshima T."/>
            <person name="Oyama S."/>
            <person name="Saito N."/>
            <person name="Sampei G."/>
            <person name="Satoh Y."/>
            <person name="Sivasundaram S."/>
            <person name="Tagami H."/>
            <person name="Takahashi H."/>
            <person name="Takeda J."/>
            <person name="Takemoto K."/>
            <person name="Uehara K."/>
            <person name="Wada C."/>
            <person name="Yamagata S."/>
            <person name="Horiuchi T."/>
        </authorList>
    </citation>
    <scope>NUCLEOTIDE SEQUENCE [LARGE SCALE GENOMIC DNA]</scope>
    <source>
        <strain>K12 / W3110 / ATCC 27325 / DSM 5911</strain>
    </source>
</reference>
<reference key="4">
    <citation type="journal article" date="1997" name="Science">
        <title>The complete genome sequence of Escherichia coli K-12.</title>
        <authorList>
            <person name="Blattner F.R."/>
            <person name="Plunkett G. III"/>
            <person name="Bloch C.A."/>
            <person name="Perna N.T."/>
            <person name="Burland V."/>
            <person name="Riley M."/>
            <person name="Collado-Vides J."/>
            <person name="Glasner J.D."/>
            <person name="Rode C.K."/>
            <person name="Mayhew G.F."/>
            <person name="Gregor J."/>
            <person name="Davis N.W."/>
            <person name="Kirkpatrick H.A."/>
            <person name="Goeden M.A."/>
            <person name="Rose D.J."/>
            <person name="Mau B."/>
            <person name="Shao Y."/>
        </authorList>
    </citation>
    <scope>NUCLEOTIDE SEQUENCE [LARGE SCALE GENOMIC DNA]</scope>
    <source>
        <strain>K12 / MG1655 / ATCC 47076</strain>
    </source>
</reference>
<reference key="5">
    <citation type="journal article" date="2006" name="Mol. Syst. Biol.">
        <title>Highly accurate genome sequences of Escherichia coli K-12 strains MG1655 and W3110.</title>
        <authorList>
            <person name="Hayashi K."/>
            <person name="Morooka N."/>
            <person name="Yamamoto Y."/>
            <person name="Fujita K."/>
            <person name="Isono K."/>
            <person name="Choi S."/>
            <person name="Ohtsubo E."/>
            <person name="Baba T."/>
            <person name="Wanner B.L."/>
            <person name="Mori H."/>
            <person name="Horiuchi T."/>
        </authorList>
    </citation>
    <scope>NUCLEOTIDE SEQUENCE [LARGE SCALE GENOMIC DNA]</scope>
    <source>
        <strain>K12 / W3110 / ATCC 27325 / DSM 5911</strain>
    </source>
</reference>
<reference key="6">
    <citation type="journal article" date="1985" name="J. Biol. Chem.">
        <title>Primary structure of histidine-tRNA synthetase and characterization of hisS transcripts.</title>
        <authorList>
            <person name="Freedman R."/>
            <person name="Gibson B."/>
            <person name="Donovan D."/>
            <person name="Biemann K."/>
            <person name="Eisenbeis S.J."/>
            <person name="Parker J."/>
            <person name="Schimmel P."/>
        </authorList>
    </citation>
    <scope>PRELIMINARY NUCLEOTIDE SEQUENCE [GENOMIC DNA] OF 343-372</scope>
</reference>
<reference key="7">
    <citation type="journal article" date="2001" name="FEBS Lett.">
        <title>Identification of gcpE as a novel gene of the 2-C-methyl-D-erythritol 4-phosphate pathway for isoprenoid biosynthesis in Escherichia coli.</title>
        <authorList>
            <person name="Campos N."/>
            <person name="Rodriguez-Concepcion M."/>
            <person name="Seemann M."/>
            <person name="Rohmer M."/>
            <person name="Boronat A."/>
        </authorList>
    </citation>
    <scope>PATHWAY</scope>
    <source>
        <strain>K12 / MC4100 / ATCC 35695 / DSM 6574</strain>
    </source>
</reference>
<reference key="8">
    <citation type="journal article" date="2001" name="J. Bacteriol.">
        <title>GcpE is involved in the 2-C-methyl-D-erythritol 4-phosphate pathway of isoprenoid biosynthesis in Escherichia coli.</title>
        <authorList>
            <person name="Altincicek B."/>
            <person name="Kollas A.-K."/>
            <person name="Sanderbrand S."/>
            <person name="Wiesner J."/>
            <person name="Hintz M."/>
            <person name="Beck E."/>
            <person name="Jomaa H."/>
        </authorList>
    </citation>
    <scope>PATHWAY</scope>
</reference>
<reference key="9">
    <citation type="journal article" date="2002" name="Angew. Chem. Int. Ed.">
        <title>Isoprenoid biosynthesis through the methylerythritol phosphate pathway: the (E)-4-hydroxy-3-methylbut-2-enyl diphosphate synthase (GcpE) is a [4Fe-4S] protein.</title>
        <authorList>
            <person name="Seemann M."/>
            <person name="Tse Sum Bui B."/>
            <person name="Wolff M."/>
            <person name="Tritsch D."/>
            <person name="Campos N."/>
            <person name="Boronat A."/>
            <person name="Marquet A."/>
            <person name="Rohmer M."/>
        </authorList>
    </citation>
    <scope>CATALYTIC ACTIVITY</scope>
    <scope>COFACTOR</scope>
    <scope>REACTION MECHANISM</scope>
    <source>
        <strain>K12 / W3110 / ATCC 27325 / DSM 5911</strain>
    </source>
</reference>
<reference key="10">
    <citation type="journal article" date="2003" name="Proc. Natl. Acad. Sci. U.S.A.">
        <title>The deoxyxylulose phosphate pathway of isoprenoid biosynthesis: studies on the mechanisms of the reactions catalyzed by IspG and IspH protein.</title>
        <authorList>
            <person name="Rohdich F."/>
            <person name="Zepeck F."/>
            <person name="Adam P."/>
            <person name="Hecht S."/>
            <person name="Kaiser J."/>
            <person name="Laupitz R."/>
            <person name="Graewert T."/>
            <person name="Amslinger S."/>
            <person name="Eisenreich W."/>
            <person name="Bacher A."/>
            <person name="Arigoni D."/>
        </authorList>
    </citation>
    <scope>CATALYTIC ACTIVITY</scope>
</reference>
<reference key="11">
    <citation type="journal article" date="2003" name="Biochem. Biophys. Res. Commun.">
        <title>Identification of lethal mutations in Escherichia coli genes encoding enzymes of the methylerythritol phosphate pathway.</title>
        <authorList>
            <person name="Sauret-Gueeto S."/>
            <person name="Ramos-Valdivia A."/>
            <person name="Ibanez E."/>
            <person name="Boronat A."/>
            <person name="Rodriguez-Concepcion M."/>
        </authorList>
    </citation>
    <scope>MUTAGENESIS OF GLY-322; GLY-328 AND ARG-335</scope>
</reference>
<reference key="12">
    <citation type="journal article" date="2005" name="FEBS Lett.">
        <title>fldA is an essential gene required in the 2-C-methyl-D-erythritol 4-phosphate pathway for isoprenoid biosynthesis.</title>
        <authorList>
            <person name="Puan K.J."/>
            <person name="Wang H."/>
            <person name="Dairi T."/>
            <person name="Kuzuyama T."/>
            <person name="Morita C.T."/>
        </authorList>
    </citation>
    <scope>FUNCTION</scope>
    <scope>REQUIREMENT FOR FLAVODOXIN</scope>
</reference>
<reference key="13">
    <citation type="journal article" date="2005" name="J. Org. Chem.">
        <title>Biosynthesis of isoprenoids. purification and properties of IspG protein from Escherichia coli.</title>
        <authorList>
            <person name="Zepeck F."/>
            <person name="Grawert T."/>
            <person name="Kaiser J."/>
            <person name="Schramek N."/>
            <person name="Eisenreich W."/>
            <person name="Bacher A."/>
            <person name="Rohdich F."/>
        </authorList>
    </citation>
    <scope>FUNCTION</scope>
    <scope>CATALYTIC ACTIVITY</scope>
    <scope>COFACTOR</scope>
    <scope>PH DEPENDENCE</scope>
</reference>
<comment type="function">
    <text evidence="1 7 8">Converts 2C-methyl-D-erythritol 2,4-cyclodiphosphate (ME-2,4cPP) into 1-hydroxy-2-methyl-2-(E)-butenyl 4-diphosphate, using flavodoxin as the reducing agent.</text>
</comment>
<comment type="catalytic activity">
    <reaction evidence="1 4 5 8">
        <text>(2E)-4-hydroxy-3-methylbut-2-enyl diphosphate + oxidized [flavodoxin] + H2O + 2 H(+) = 2-C-methyl-D-erythritol 2,4-cyclic diphosphate + reduced [flavodoxin]</text>
        <dbReference type="Rhea" id="RHEA:43604"/>
        <dbReference type="Rhea" id="RHEA-COMP:10622"/>
        <dbReference type="Rhea" id="RHEA-COMP:10623"/>
        <dbReference type="ChEBI" id="CHEBI:15377"/>
        <dbReference type="ChEBI" id="CHEBI:15378"/>
        <dbReference type="ChEBI" id="CHEBI:57618"/>
        <dbReference type="ChEBI" id="CHEBI:58210"/>
        <dbReference type="ChEBI" id="CHEBI:58483"/>
        <dbReference type="ChEBI" id="CHEBI:128753"/>
        <dbReference type="EC" id="1.17.7.3"/>
    </reaction>
</comment>
<comment type="cofactor">
    <cofactor evidence="1 4 8">
        <name>[4Fe-4S] cluster</name>
        <dbReference type="ChEBI" id="CHEBI:49883"/>
    </cofactor>
    <text evidence="1 4 8">Binds 1 [4Fe-4S] cluster.</text>
</comment>
<comment type="biophysicochemical properties">
    <phDependence>
        <text evidence="8">Optimum pH is 9.</text>
    </phDependence>
</comment>
<comment type="pathway">
    <text evidence="1 2 3">Isoprenoid biosynthesis; isopentenyl diphosphate biosynthesis via DXP pathway; isopentenyl diphosphate from 1-deoxy-D-xylulose 5-phosphate: step 5/6.</text>
</comment>
<comment type="interaction">
    <interactant intactId="EBI-550338">
        <id>P62620</id>
    </interactant>
    <interactant intactId="EBI-1113651">
        <id>P77188</id>
        <label>ecpB</label>
    </interactant>
    <organismsDiffer>false</organismsDiffer>
    <experiments>2</experiments>
</comment>
<comment type="similarity">
    <text evidence="1">Belongs to the IspG family.</text>
</comment>